<protein>
    <recommendedName>
        <fullName evidence="1">Ribosomal RNA small subunit methyltransferase J</fullName>
        <ecNumber evidence="1">2.1.1.242</ecNumber>
    </recommendedName>
    <alternativeName>
        <fullName evidence="1">16S rRNA m2G1516 methyltransferase</fullName>
    </alternativeName>
    <alternativeName>
        <fullName evidence="1">rRNA (guanine-N(2)-)-methyltransferase</fullName>
    </alternativeName>
</protein>
<organism>
    <name type="scientific">Escherichia coli (strain ATCC 8739 / DSM 1576 / NBRC 3972 / NCIMB 8545 / WDCM 00012 / Crooks)</name>
    <dbReference type="NCBI Taxonomy" id="481805"/>
    <lineage>
        <taxon>Bacteria</taxon>
        <taxon>Pseudomonadati</taxon>
        <taxon>Pseudomonadota</taxon>
        <taxon>Gammaproteobacteria</taxon>
        <taxon>Enterobacterales</taxon>
        <taxon>Enterobacteriaceae</taxon>
        <taxon>Escherichia</taxon>
    </lineage>
</organism>
<accession>B1J0D5</accession>
<name>RSMJ_ECOLC</name>
<gene>
    <name evidence="1" type="primary">rsmJ</name>
    <name type="synonym">yhiQ</name>
    <name type="ordered locus">EcolC_0219</name>
</gene>
<proteinExistence type="inferred from homology"/>
<comment type="function">
    <text evidence="1">Specifically methylates the guanosine in position 1516 of 16S rRNA.</text>
</comment>
<comment type="catalytic activity">
    <reaction evidence="1">
        <text>guanosine(1516) in 16S rRNA + S-adenosyl-L-methionine = N(2)-methylguanosine(1516) in 16S rRNA + S-adenosyl-L-homocysteine + H(+)</text>
        <dbReference type="Rhea" id="RHEA:43220"/>
        <dbReference type="Rhea" id="RHEA-COMP:10412"/>
        <dbReference type="Rhea" id="RHEA-COMP:10413"/>
        <dbReference type="ChEBI" id="CHEBI:15378"/>
        <dbReference type="ChEBI" id="CHEBI:57856"/>
        <dbReference type="ChEBI" id="CHEBI:59789"/>
        <dbReference type="ChEBI" id="CHEBI:74269"/>
        <dbReference type="ChEBI" id="CHEBI:74481"/>
        <dbReference type="EC" id="2.1.1.242"/>
    </reaction>
</comment>
<comment type="subcellular location">
    <subcellularLocation>
        <location evidence="1">Cytoplasm</location>
    </subcellularLocation>
</comment>
<comment type="similarity">
    <text evidence="1">Belongs to the methyltransferase superfamily. RsmJ family.</text>
</comment>
<feature type="chain" id="PRO_1000087565" description="Ribosomal RNA small subunit methyltransferase J">
    <location>
        <begin position="1"/>
        <end position="250"/>
    </location>
</feature>
<feature type="binding site" evidence="1">
    <location>
        <begin position="101"/>
        <end position="102"/>
    </location>
    <ligand>
        <name>S-adenosyl-L-methionine</name>
        <dbReference type="ChEBI" id="CHEBI:59789"/>
    </ligand>
</feature>
<feature type="binding site" evidence="1">
    <location>
        <begin position="117"/>
        <end position="118"/>
    </location>
    <ligand>
        <name>S-adenosyl-L-methionine</name>
        <dbReference type="ChEBI" id="CHEBI:59789"/>
    </ligand>
</feature>
<feature type="binding site" evidence="1">
    <location>
        <begin position="153"/>
        <end position="154"/>
    </location>
    <ligand>
        <name>S-adenosyl-L-methionine</name>
        <dbReference type="ChEBI" id="CHEBI:59789"/>
    </ligand>
</feature>
<feature type="binding site" evidence="1">
    <location>
        <position position="171"/>
    </location>
    <ligand>
        <name>S-adenosyl-L-methionine</name>
        <dbReference type="ChEBI" id="CHEBI:59789"/>
    </ligand>
</feature>
<reference key="1">
    <citation type="submission" date="2008-02" db="EMBL/GenBank/DDBJ databases">
        <title>Complete sequence of Escherichia coli C str. ATCC 8739.</title>
        <authorList>
            <person name="Copeland A."/>
            <person name="Lucas S."/>
            <person name="Lapidus A."/>
            <person name="Glavina del Rio T."/>
            <person name="Dalin E."/>
            <person name="Tice H."/>
            <person name="Bruce D."/>
            <person name="Goodwin L."/>
            <person name="Pitluck S."/>
            <person name="Kiss H."/>
            <person name="Brettin T."/>
            <person name="Detter J.C."/>
            <person name="Han C."/>
            <person name="Kuske C.R."/>
            <person name="Schmutz J."/>
            <person name="Larimer F."/>
            <person name="Land M."/>
            <person name="Hauser L."/>
            <person name="Kyrpides N."/>
            <person name="Mikhailova N."/>
            <person name="Ingram L."/>
            <person name="Richardson P."/>
        </authorList>
    </citation>
    <scope>NUCLEOTIDE SEQUENCE [LARGE SCALE GENOMIC DNA]</scope>
    <source>
        <strain>ATCC 8739 / DSM 1576 / NBRC 3972 / NCIMB 8545 / WDCM 00012 / Crooks</strain>
    </source>
</reference>
<dbReference type="EC" id="2.1.1.242" evidence="1"/>
<dbReference type="EMBL" id="CP000946">
    <property type="protein sequence ID" value="ACA75900.1"/>
    <property type="molecule type" value="Genomic_DNA"/>
</dbReference>
<dbReference type="RefSeq" id="WP_000686620.1">
    <property type="nucleotide sequence ID" value="NZ_MTFT01000051.1"/>
</dbReference>
<dbReference type="SMR" id="B1J0D5"/>
<dbReference type="KEGG" id="ecl:EcolC_0219"/>
<dbReference type="HOGENOM" id="CLU_076324_0_0_6"/>
<dbReference type="GO" id="GO:0005737">
    <property type="term" value="C:cytoplasm"/>
    <property type="evidence" value="ECO:0007669"/>
    <property type="project" value="UniProtKB-SubCell"/>
</dbReference>
<dbReference type="GO" id="GO:0008990">
    <property type="term" value="F:rRNA (guanine-N2-)-methyltransferase activity"/>
    <property type="evidence" value="ECO:0007669"/>
    <property type="project" value="UniProtKB-UniRule"/>
</dbReference>
<dbReference type="CDD" id="cd02440">
    <property type="entry name" value="AdoMet_MTases"/>
    <property type="match status" value="1"/>
</dbReference>
<dbReference type="FunFam" id="3.40.1630.10:FF:000001">
    <property type="entry name" value="Ribosomal RNA small subunit methyltransferase J"/>
    <property type="match status" value="1"/>
</dbReference>
<dbReference type="FunFam" id="3.40.50.150:FF:000072">
    <property type="entry name" value="Ribosomal RNA small subunit methyltransferase J"/>
    <property type="match status" value="1"/>
</dbReference>
<dbReference type="Gene3D" id="3.40.50.150">
    <property type="entry name" value="Vaccinia Virus protein VP39"/>
    <property type="match status" value="1"/>
</dbReference>
<dbReference type="Gene3D" id="3.40.1630.10">
    <property type="entry name" value="YhiQ-like domain"/>
    <property type="match status" value="1"/>
</dbReference>
<dbReference type="HAMAP" id="MF_01523">
    <property type="entry name" value="16SrRNA_methyltr_J"/>
    <property type="match status" value="1"/>
</dbReference>
<dbReference type="InterPro" id="IPR007536">
    <property type="entry name" value="16SrRNA_methylTrfase_J"/>
</dbReference>
<dbReference type="InterPro" id="IPR029063">
    <property type="entry name" value="SAM-dependent_MTases_sf"/>
</dbReference>
<dbReference type="NCBIfam" id="NF008012">
    <property type="entry name" value="PRK10742.1"/>
    <property type="match status" value="1"/>
</dbReference>
<dbReference type="PANTHER" id="PTHR36112">
    <property type="entry name" value="RIBOSOMAL RNA SMALL SUBUNIT METHYLTRANSFERASE J"/>
    <property type="match status" value="1"/>
</dbReference>
<dbReference type="PANTHER" id="PTHR36112:SF1">
    <property type="entry name" value="RIBOSOMAL RNA SMALL SUBUNIT METHYLTRANSFERASE J"/>
    <property type="match status" value="1"/>
</dbReference>
<dbReference type="Pfam" id="PF04445">
    <property type="entry name" value="SAM_MT"/>
    <property type="match status" value="1"/>
</dbReference>
<dbReference type="SUPFAM" id="SSF53335">
    <property type="entry name" value="S-adenosyl-L-methionine-dependent methyltransferases"/>
    <property type="match status" value="1"/>
</dbReference>
<sequence>MKICLIDETGTGDGALSVLAARWGLEHDEDNLMALVLTPEHLELRKRDEPKLGGIFVDFVGGAMAHRRKFGGGRGEAVAKAVGIKGDYLPDVVDATAGLGRDAFVLASVGCRVRMLERNPVVAALLDDGLARGYADAEIGGWLQERLQLIHASSLTALTDITPRPQVVYLDPMFPHKQKSALVKKEMRVFQSLVGPDLDADGLLEPARLLATKRVVVKRPDYAPPLANVATPNAVVTKGHRFDIYAGTPV</sequence>
<evidence type="ECO:0000255" key="1">
    <source>
        <dbReference type="HAMAP-Rule" id="MF_01523"/>
    </source>
</evidence>
<keyword id="KW-0963">Cytoplasm</keyword>
<keyword id="KW-0489">Methyltransferase</keyword>
<keyword id="KW-0698">rRNA processing</keyword>
<keyword id="KW-0949">S-adenosyl-L-methionine</keyword>
<keyword id="KW-0808">Transferase</keyword>